<sequence length="272" mass="30881">MRLSSHGKKTVSTSNNPVFNRIGLFFTAAILFALFLQMLFFLRPWQDIKETKVYTFQMDYRQVLKKVDLKVGDPYWRWAGQGQTINRRIKNDSMIRSLSLRLSKNGTAIIRVNENLTAGFVQIKQKWYRMDQNAHLSSKSIQPDGKTPVYTDFKNGSKILKKTITAYLSMDKVMRLAVAQIIYSPVKSSPNRLALVMNDGNLVYANPSSLAKRMDLYPKMVATMEEKGIKNGVIDLQYGGYARKFENSDDNLLSSLSSDKSKSSSKSSNSSK</sequence>
<proteinExistence type="inferred from homology"/>
<dbReference type="EMBL" id="CP000411">
    <property type="protein sequence ID" value="ABJ57041.1"/>
    <property type="molecule type" value="Genomic_DNA"/>
</dbReference>
<dbReference type="SMR" id="Q04ET1"/>
<dbReference type="STRING" id="203123.OEOE_1145"/>
<dbReference type="KEGG" id="ooe:OEOE_1145"/>
<dbReference type="eggNOG" id="COG1589">
    <property type="taxonomic scope" value="Bacteria"/>
</dbReference>
<dbReference type="HOGENOM" id="CLU_046278_0_1_9"/>
<dbReference type="Proteomes" id="UP000000774">
    <property type="component" value="Chromosome"/>
</dbReference>
<dbReference type="GO" id="GO:0032153">
    <property type="term" value="C:cell division site"/>
    <property type="evidence" value="ECO:0007669"/>
    <property type="project" value="UniProtKB-UniRule"/>
</dbReference>
<dbReference type="GO" id="GO:0005886">
    <property type="term" value="C:plasma membrane"/>
    <property type="evidence" value="ECO:0007669"/>
    <property type="project" value="UniProtKB-SubCell"/>
</dbReference>
<dbReference type="GO" id="GO:0043093">
    <property type="term" value="P:FtsZ-dependent cytokinesis"/>
    <property type="evidence" value="ECO:0007669"/>
    <property type="project" value="UniProtKB-UniRule"/>
</dbReference>
<dbReference type="Gene3D" id="3.40.50.10960">
    <property type="match status" value="1"/>
</dbReference>
<dbReference type="HAMAP" id="MF_00912">
    <property type="entry name" value="DivIB"/>
    <property type="match status" value="1"/>
</dbReference>
<dbReference type="InterPro" id="IPR005548">
    <property type="entry name" value="Cell_div_FtsQ/DivIB_C"/>
</dbReference>
<dbReference type="InterPro" id="IPR026580">
    <property type="entry name" value="DivIB"/>
</dbReference>
<dbReference type="InterPro" id="IPR050487">
    <property type="entry name" value="FtsQ_DivIB"/>
</dbReference>
<dbReference type="InterPro" id="IPR034746">
    <property type="entry name" value="POTRA"/>
</dbReference>
<dbReference type="PANTHER" id="PTHR37820">
    <property type="entry name" value="CELL DIVISION PROTEIN DIVIB"/>
    <property type="match status" value="1"/>
</dbReference>
<dbReference type="PANTHER" id="PTHR37820:SF1">
    <property type="entry name" value="CELL DIVISION PROTEIN FTSQ"/>
    <property type="match status" value="1"/>
</dbReference>
<dbReference type="Pfam" id="PF03799">
    <property type="entry name" value="FtsQ_DivIB_C"/>
    <property type="match status" value="1"/>
</dbReference>
<dbReference type="PROSITE" id="PS51779">
    <property type="entry name" value="POTRA"/>
    <property type="match status" value="1"/>
</dbReference>
<organism>
    <name type="scientific">Oenococcus oeni (strain ATCC BAA-331 / PSU-1)</name>
    <dbReference type="NCBI Taxonomy" id="203123"/>
    <lineage>
        <taxon>Bacteria</taxon>
        <taxon>Bacillati</taxon>
        <taxon>Bacillota</taxon>
        <taxon>Bacilli</taxon>
        <taxon>Lactobacillales</taxon>
        <taxon>Lactobacillaceae</taxon>
        <taxon>Oenococcus</taxon>
    </lineage>
</organism>
<name>DIVIB_OENOB</name>
<accession>Q04ET1</accession>
<protein>
    <recommendedName>
        <fullName evidence="1">Cell division protein DivIB</fullName>
    </recommendedName>
</protein>
<evidence type="ECO:0000255" key="1">
    <source>
        <dbReference type="HAMAP-Rule" id="MF_00912"/>
    </source>
</evidence>
<evidence type="ECO:0000255" key="2">
    <source>
        <dbReference type="PROSITE-ProRule" id="PRU01115"/>
    </source>
</evidence>
<evidence type="ECO:0000256" key="3">
    <source>
        <dbReference type="SAM" id="MobiDB-lite"/>
    </source>
</evidence>
<gene>
    <name evidence="1" type="primary">divIB</name>
    <name type="ordered locus">OEOE_1145</name>
</gene>
<keyword id="KW-0131">Cell cycle</keyword>
<keyword id="KW-0132">Cell division</keyword>
<keyword id="KW-1003">Cell membrane</keyword>
<keyword id="KW-0472">Membrane</keyword>
<keyword id="KW-1185">Reference proteome</keyword>
<keyword id="KW-0812">Transmembrane</keyword>
<keyword id="KW-1133">Transmembrane helix</keyword>
<comment type="function">
    <text evidence="1">Cell division protein that may be involved in stabilizing or promoting the assembly of the division complex.</text>
</comment>
<comment type="subcellular location">
    <subcellularLocation>
        <location evidence="1">Cell membrane</location>
        <topology evidence="1">Single-pass type II membrane protein</topology>
    </subcellularLocation>
    <text evidence="1">Localizes to the division septum.</text>
</comment>
<comment type="similarity">
    <text evidence="1">Belongs to the FtsQ/DivIB family. DivIB subfamily.</text>
</comment>
<reference key="1">
    <citation type="journal article" date="2006" name="Proc. Natl. Acad. Sci. U.S.A.">
        <title>Comparative genomics of the lactic acid bacteria.</title>
        <authorList>
            <person name="Makarova K.S."/>
            <person name="Slesarev A."/>
            <person name="Wolf Y.I."/>
            <person name="Sorokin A."/>
            <person name="Mirkin B."/>
            <person name="Koonin E.V."/>
            <person name="Pavlov A."/>
            <person name="Pavlova N."/>
            <person name="Karamychev V."/>
            <person name="Polouchine N."/>
            <person name="Shakhova V."/>
            <person name="Grigoriev I."/>
            <person name="Lou Y."/>
            <person name="Rohksar D."/>
            <person name="Lucas S."/>
            <person name="Huang K."/>
            <person name="Goodstein D.M."/>
            <person name="Hawkins T."/>
            <person name="Plengvidhya V."/>
            <person name="Welker D."/>
            <person name="Hughes J."/>
            <person name="Goh Y."/>
            <person name="Benson A."/>
            <person name="Baldwin K."/>
            <person name="Lee J.-H."/>
            <person name="Diaz-Muniz I."/>
            <person name="Dosti B."/>
            <person name="Smeianov V."/>
            <person name="Wechter W."/>
            <person name="Barabote R."/>
            <person name="Lorca G."/>
            <person name="Altermann E."/>
            <person name="Barrangou R."/>
            <person name="Ganesan B."/>
            <person name="Xie Y."/>
            <person name="Rawsthorne H."/>
            <person name="Tamir D."/>
            <person name="Parker C."/>
            <person name="Breidt F."/>
            <person name="Broadbent J.R."/>
            <person name="Hutkins R."/>
            <person name="O'Sullivan D."/>
            <person name="Steele J."/>
            <person name="Unlu G."/>
            <person name="Saier M.H. Jr."/>
            <person name="Klaenhammer T."/>
            <person name="Richardson P."/>
            <person name="Kozyavkin S."/>
            <person name="Weimer B.C."/>
            <person name="Mills D.A."/>
        </authorList>
    </citation>
    <scope>NUCLEOTIDE SEQUENCE [LARGE SCALE GENOMIC DNA]</scope>
    <source>
        <strain>ATCC BAA-331 / PSU-1</strain>
    </source>
</reference>
<feature type="chain" id="PRO_0000414781" description="Cell division protein DivIB">
    <location>
        <begin position="1"/>
        <end position="272"/>
    </location>
</feature>
<feature type="topological domain" description="Cytoplasmic" evidence="1">
    <location>
        <begin position="1"/>
        <end position="21"/>
    </location>
</feature>
<feature type="transmembrane region" description="Helical" evidence="1">
    <location>
        <begin position="22"/>
        <end position="42"/>
    </location>
</feature>
<feature type="topological domain" description="Extracellular" evidence="1">
    <location>
        <begin position="43"/>
        <end position="272"/>
    </location>
</feature>
<feature type="domain" description="POTRA" evidence="2">
    <location>
        <begin position="43"/>
        <end position="115"/>
    </location>
</feature>
<feature type="region of interest" description="Disordered" evidence="3">
    <location>
        <begin position="253"/>
        <end position="272"/>
    </location>
</feature>